<gene>
    <name type="ordered locus">aq_1295</name>
</gene>
<proteinExistence type="predicted"/>
<reference key="1">
    <citation type="journal article" date="1998" name="Nature">
        <title>The complete genome of the hyperthermophilic bacterium Aquifex aeolicus.</title>
        <authorList>
            <person name="Deckert G."/>
            <person name="Warren P.V."/>
            <person name="Gaasterland T."/>
            <person name="Young W.G."/>
            <person name="Lenox A.L."/>
            <person name="Graham D.E."/>
            <person name="Overbeek R."/>
            <person name="Snead M.A."/>
            <person name="Keller M."/>
            <person name="Aujay M."/>
            <person name="Huber R."/>
            <person name="Feldman R.A."/>
            <person name="Short J.M."/>
            <person name="Olsen G.J."/>
            <person name="Swanson R.V."/>
        </authorList>
    </citation>
    <scope>NUCLEOTIDE SEQUENCE [LARGE SCALE GENOMIC DNA]</scope>
    <source>
        <strain>VF5</strain>
    </source>
</reference>
<dbReference type="EMBL" id="AE000657">
    <property type="protein sequence ID" value="AAC07293.1"/>
    <property type="molecule type" value="Genomic_DNA"/>
</dbReference>
<dbReference type="PIR" id="A70412">
    <property type="entry name" value="A70412"/>
</dbReference>
<dbReference type="RefSeq" id="NP_213888.1">
    <property type="nucleotide sequence ID" value="NC_000918.1"/>
</dbReference>
<dbReference type="SMR" id="O67324"/>
<dbReference type="STRING" id="224324.aq_1295"/>
<dbReference type="EnsemblBacteria" id="AAC07293">
    <property type="protein sequence ID" value="AAC07293"/>
    <property type="gene ID" value="aq_1295"/>
</dbReference>
<dbReference type="KEGG" id="aae:aq_1295"/>
<dbReference type="HOGENOM" id="CLU_1683003_0_0_0"/>
<dbReference type="InParanoid" id="O67324"/>
<dbReference type="Proteomes" id="UP000000798">
    <property type="component" value="Chromosome"/>
</dbReference>
<accession>O67324</accession>
<name>Y1295_AQUAE</name>
<keyword id="KW-0175">Coiled coil</keyword>
<keyword id="KW-1185">Reference proteome</keyword>
<feature type="chain" id="PRO_0000186918" description="Uncharacterized protein aq_1295">
    <location>
        <begin position="1"/>
        <end position="156"/>
    </location>
</feature>
<feature type="coiled-coil region" evidence="1">
    <location>
        <begin position="43"/>
        <end position="84"/>
    </location>
</feature>
<evidence type="ECO:0000255" key="1"/>
<sequence length="156" mass="17852">MMKEETRTGIGLKDVSIRLVSESPLLPVGGFVYCEYGIPVRYLKIDENEVKLEISVEKLKNLSRVCENIEQVVDKVVEELRYALPEGVFTIAKVYANGIKLRELSYLEEYTSVGKGIIIDEDRELDQEMPAYVKENRETILGTIREVILLELMYSS</sequence>
<organism>
    <name type="scientific">Aquifex aeolicus (strain VF5)</name>
    <dbReference type="NCBI Taxonomy" id="224324"/>
    <lineage>
        <taxon>Bacteria</taxon>
        <taxon>Pseudomonadati</taxon>
        <taxon>Aquificota</taxon>
        <taxon>Aquificia</taxon>
        <taxon>Aquificales</taxon>
        <taxon>Aquificaceae</taxon>
        <taxon>Aquifex</taxon>
    </lineage>
</organism>
<protein>
    <recommendedName>
        <fullName>Uncharacterized protein aq_1295</fullName>
    </recommendedName>
</protein>